<reference key="1">
    <citation type="journal article" date="2000" name="Nature">
        <title>Sequence and analysis of chromosome 3 of the plant Arabidopsis thaliana.</title>
        <authorList>
            <person name="Salanoubat M."/>
            <person name="Lemcke K."/>
            <person name="Rieger M."/>
            <person name="Ansorge W."/>
            <person name="Unseld M."/>
            <person name="Fartmann B."/>
            <person name="Valle G."/>
            <person name="Bloecker H."/>
            <person name="Perez-Alonso M."/>
            <person name="Obermaier B."/>
            <person name="Delseny M."/>
            <person name="Boutry M."/>
            <person name="Grivell L.A."/>
            <person name="Mache R."/>
            <person name="Puigdomenech P."/>
            <person name="De Simone V."/>
            <person name="Choisne N."/>
            <person name="Artiguenave F."/>
            <person name="Robert C."/>
            <person name="Brottier P."/>
            <person name="Wincker P."/>
            <person name="Cattolico L."/>
            <person name="Weissenbach J."/>
            <person name="Saurin W."/>
            <person name="Quetier F."/>
            <person name="Schaefer M."/>
            <person name="Mueller-Auer S."/>
            <person name="Gabel C."/>
            <person name="Fuchs M."/>
            <person name="Benes V."/>
            <person name="Wurmbach E."/>
            <person name="Drzonek H."/>
            <person name="Erfle H."/>
            <person name="Jordan N."/>
            <person name="Bangert S."/>
            <person name="Wiedelmann R."/>
            <person name="Kranz H."/>
            <person name="Voss H."/>
            <person name="Holland R."/>
            <person name="Brandt P."/>
            <person name="Nyakatura G."/>
            <person name="Vezzi A."/>
            <person name="D'Angelo M."/>
            <person name="Pallavicini A."/>
            <person name="Toppo S."/>
            <person name="Simionati B."/>
            <person name="Conrad A."/>
            <person name="Hornischer K."/>
            <person name="Kauer G."/>
            <person name="Loehnert T.-H."/>
            <person name="Nordsiek G."/>
            <person name="Reichelt J."/>
            <person name="Scharfe M."/>
            <person name="Schoen O."/>
            <person name="Bargues M."/>
            <person name="Terol J."/>
            <person name="Climent J."/>
            <person name="Navarro P."/>
            <person name="Collado C."/>
            <person name="Perez-Perez A."/>
            <person name="Ottenwaelder B."/>
            <person name="Duchemin D."/>
            <person name="Cooke R."/>
            <person name="Laudie M."/>
            <person name="Berger-Llauro C."/>
            <person name="Purnelle B."/>
            <person name="Masuy D."/>
            <person name="de Haan M."/>
            <person name="Maarse A.C."/>
            <person name="Alcaraz J.-P."/>
            <person name="Cottet A."/>
            <person name="Casacuberta E."/>
            <person name="Monfort A."/>
            <person name="Argiriou A."/>
            <person name="Flores M."/>
            <person name="Liguori R."/>
            <person name="Vitale D."/>
            <person name="Mannhaupt G."/>
            <person name="Haase D."/>
            <person name="Schoof H."/>
            <person name="Rudd S."/>
            <person name="Zaccaria P."/>
            <person name="Mewes H.-W."/>
            <person name="Mayer K.F.X."/>
            <person name="Kaul S."/>
            <person name="Town C.D."/>
            <person name="Koo H.L."/>
            <person name="Tallon L.J."/>
            <person name="Jenkins J."/>
            <person name="Rooney T."/>
            <person name="Rizzo M."/>
            <person name="Walts A."/>
            <person name="Utterback T."/>
            <person name="Fujii C.Y."/>
            <person name="Shea T.P."/>
            <person name="Creasy T.H."/>
            <person name="Haas B."/>
            <person name="Maiti R."/>
            <person name="Wu D."/>
            <person name="Peterson J."/>
            <person name="Van Aken S."/>
            <person name="Pai G."/>
            <person name="Militscher J."/>
            <person name="Sellers P."/>
            <person name="Gill J.E."/>
            <person name="Feldblyum T.V."/>
            <person name="Preuss D."/>
            <person name="Lin X."/>
            <person name="Nierman W.C."/>
            <person name="Salzberg S.L."/>
            <person name="White O."/>
            <person name="Venter J.C."/>
            <person name="Fraser C.M."/>
            <person name="Kaneko T."/>
            <person name="Nakamura Y."/>
            <person name="Sato S."/>
            <person name="Kato T."/>
            <person name="Asamizu E."/>
            <person name="Sasamoto S."/>
            <person name="Kimura T."/>
            <person name="Idesawa K."/>
            <person name="Kawashima K."/>
            <person name="Kishida Y."/>
            <person name="Kiyokawa C."/>
            <person name="Kohara M."/>
            <person name="Matsumoto M."/>
            <person name="Matsuno A."/>
            <person name="Muraki A."/>
            <person name="Nakayama S."/>
            <person name="Nakazaki N."/>
            <person name="Shinpo S."/>
            <person name="Takeuchi C."/>
            <person name="Wada T."/>
            <person name="Watanabe A."/>
            <person name="Yamada M."/>
            <person name="Yasuda M."/>
            <person name="Tabata S."/>
        </authorList>
    </citation>
    <scope>NUCLEOTIDE SEQUENCE [LARGE SCALE GENOMIC DNA]</scope>
    <source>
        <strain>cv. Columbia</strain>
    </source>
</reference>
<reference key="2">
    <citation type="journal article" date="2017" name="Plant J.">
        <title>Araport11: a complete reannotation of the Arabidopsis thaliana reference genome.</title>
        <authorList>
            <person name="Cheng C.Y."/>
            <person name="Krishnakumar V."/>
            <person name="Chan A.P."/>
            <person name="Thibaud-Nissen F."/>
            <person name="Schobel S."/>
            <person name="Town C.D."/>
        </authorList>
    </citation>
    <scope>GENOME REANNOTATION</scope>
    <source>
        <strain>cv. Columbia</strain>
    </source>
</reference>
<reference key="3">
    <citation type="journal article" date="2003" name="Science">
        <title>Empirical analysis of transcriptional activity in the Arabidopsis genome.</title>
        <authorList>
            <person name="Yamada K."/>
            <person name="Lim J."/>
            <person name="Dale J.M."/>
            <person name="Chen H."/>
            <person name="Shinn P."/>
            <person name="Palm C.J."/>
            <person name="Southwick A.M."/>
            <person name="Wu H.C."/>
            <person name="Kim C.J."/>
            <person name="Nguyen M."/>
            <person name="Pham P.K."/>
            <person name="Cheuk R.F."/>
            <person name="Karlin-Newmann G."/>
            <person name="Liu S.X."/>
            <person name="Lam B."/>
            <person name="Sakano H."/>
            <person name="Wu T."/>
            <person name="Yu G."/>
            <person name="Miranda M."/>
            <person name="Quach H.L."/>
            <person name="Tripp M."/>
            <person name="Chang C.H."/>
            <person name="Lee J.M."/>
            <person name="Toriumi M.J."/>
            <person name="Chan M.M."/>
            <person name="Tang C.C."/>
            <person name="Onodera C.S."/>
            <person name="Deng J.M."/>
            <person name="Akiyama K."/>
            <person name="Ansari Y."/>
            <person name="Arakawa T."/>
            <person name="Banh J."/>
            <person name="Banno F."/>
            <person name="Bowser L."/>
            <person name="Brooks S.Y."/>
            <person name="Carninci P."/>
            <person name="Chao Q."/>
            <person name="Choy N."/>
            <person name="Enju A."/>
            <person name="Goldsmith A.D."/>
            <person name="Gurjal M."/>
            <person name="Hansen N.F."/>
            <person name="Hayashizaki Y."/>
            <person name="Johnson-Hopson C."/>
            <person name="Hsuan V.W."/>
            <person name="Iida K."/>
            <person name="Karnes M."/>
            <person name="Khan S."/>
            <person name="Koesema E."/>
            <person name="Ishida J."/>
            <person name="Jiang P.X."/>
            <person name="Jones T."/>
            <person name="Kawai J."/>
            <person name="Kamiya A."/>
            <person name="Meyers C."/>
            <person name="Nakajima M."/>
            <person name="Narusaka M."/>
            <person name="Seki M."/>
            <person name="Sakurai T."/>
            <person name="Satou M."/>
            <person name="Tamse R."/>
            <person name="Vaysberg M."/>
            <person name="Wallender E.K."/>
            <person name="Wong C."/>
            <person name="Yamamura Y."/>
            <person name="Yuan S."/>
            <person name="Shinozaki K."/>
            <person name="Davis R.W."/>
            <person name="Theologis A."/>
            <person name="Ecker J.R."/>
        </authorList>
    </citation>
    <scope>NUCLEOTIDE SEQUENCE [LARGE SCALE MRNA]</scope>
    <source>
        <strain>cv. Columbia</strain>
    </source>
</reference>
<reference key="4">
    <citation type="journal article" date="2009" name="DNA Res.">
        <title>Analysis of multiple occurrences of alternative splicing events in Arabidopsis thaliana using novel sequenced full-length cDNAs.</title>
        <authorList>
            <person name="Iida K."/>
            <person name="Fukami-Kobayashi K."/>
            <person name="Toyoda A."/>
            <person name="Sakaki Y."/>
            <person name="Kobayashi M."/>
            <person name="Seki M."/>
            <person name="Shinozaki K."/>
        </authorList>
    </citation>
    <scope>NUCLEOTIDE SEQUENCE [LARGE SCALE MRNA]</scope>
    <source>
        <strain>cv. Columbia</strain>
    </source>
</reference>
<reference key="5">
    <citation type="journal article" date="2008" name="BMC Genomics">
        <title>Genome-wide and expression analysis of protein phosphatase 2C in rice and Arabidopsis.</title>
        <authorList>
            <person name="Xue T."/>
            <person name="Wang D."/>
            <person name="Zhang S."/>
            <person name="Ehlting J."/>
            <person name="Ni F."/>
            <person name="Jacab S."/>
            <person name="Zheng C."/>
            <person name="Zhong Y."/>
        </authorList>
    </citation>
    <scope>GENE FAMILY</scope>
    <scope>NOMENCLATURE</scope>
</reference>
<comment type="catalytic activity">
    <reaction>
        <text>O-phospho-L-seryl-[protein] + H2O = L-seryl-[protein] + phosphate</text>
        <dbReference type="Rhea" id="RHEA:20629"/>
        <dbReference type="Rhea" id="RHEA-COMP:9863"/>
        <dbReference type="Rhea" id="RHEA-COMP:11604"/>
        <dbReference type="ChEBI" id="CHEBI:15377"/>
        <dbReference type="ChEBI" id="CHEBI:29999"/>
        <dbReference type="ChEBI" id="CHEBI:43474"/>
        <dbReference type="ChEBI" id="CHEBI:83421"/>
        <dbReference type="EC" id="3.1.3.16"/>
    </reaction>
</comment>
<comment type="catalytic activity">
    <reaction>
        <text>O-phospho-L-threonyl-[protein] + H2O = L-threonyl-[protein] + phosphate</text>
        <dbReference type="Rhea" id="RHEA:47004"/>
        <dbReference type="Rhea" id="RHEA-COMP:11060"/>
        <dbReference type="Rhea" id="RHEA-COMP:11605"/>
        <dbReference type="ChEBI" id="CHEBI:15377"/>
        <dbReference type="ChEBI" id="CHEBI:30013"/>
        <dbReference type="ChEBI" id="CHEBI:43474"/>
        <dbReference type="ChEBI" id="CHEBI:61977"/>
        <dbReference type="EC" id="3.1.3.16"/>
    </reaction>
</comment>
<comment type="cofactor">
    <cofactor evidence="1">
        <name>Mg(2+)</name>
        <dbReference type="ChEBI" id="CHEBI:18420"/>
    </cofactor>
    <cofactor evidence="1">
        <name>Mn(2+)</name>
        <dbReference type="ChEBI" id="CHEBI:29035"/>
    </cofactor>
    <text evidence="1">Binds 2 magnesium or manganese ions per subunit.</text>
</comment>
<comment type="interaction">
    <interactant intactId="EBI-4436207">
        <id>Q9M9W9</id>
    </interactant>
    <interactant intactId="EBI-4473692">
        <id>O80575</id>
        <label>At2g44050</label>
    </interactant>
    <organismsDiffer>false</organismsDiffer>
    <experiments>3</experiments>
</comment>
<comment type="interaction">
    <interactant intactId="EBI-4436207">
        <id>Q9M9W9</id>
    </interactant>
    <interactant intactId="EBI-25506855">
        <id>O23160</id>
        <label>MYB73</label>
    </interactant>
    <organismsDiffer>false</organismsDiffer>
    <experiments>3</experiments>
</comment>
<comment type="similarity">
    <text evidence="3">Belongs to the PP2C family.</text>
</comment>
<feature type="chain" id="PRO_0000367961" description="Probable protein phosphatase 2C 34">
    <location>
        <begin position="1"/>
        <end position="358"/>
    </location>
</feature>
<feature type="domain" description="PPM-type phosphatase" evidence="2">
    <location>
        <begin position="62"/>
        <end position="349"/>
    </location>
</feature>
<feature type="binding site" evidence="1">
    <location>
        <position position="98"/>
    </location>
    <ligand>
        <name>Mn(2+)</name>
        <dbReference type="ChEBI" id="CHEBI:29035"/>
        <label>1</label>
    </ligand>
</feature>
<feature type="binding site" evidence="1">
    <location>
        <position position="98"/>
    </location>
    <ligand>
        <name>Mn(2+)</name>
        <dbReference type="ChEBI" id="CHEBI:29035"/>
        <label>2</label>
    </ligand>
</feature>
<feature type="binding site" evidence="1">
    <location>
        <position position="99"/>
    </location>
    <ligand>
        <name>Mn(2+)</name>
        <dbReference type="ChEBI" id="CHEBI:29035"/>
        <label>1</label>
    </ligand>
</feature>
<feature type="binding site" evidence="1">
    <location>
        <position position="294"/>
    </location>
    <ligand>
        <name>Mn(2+)</name>
        <dbReference type="ChEBI" id="CHEBI:29035"/>
        <label>2</label>
    </ligand>
</feature>
<feature type="binding site" evidence="1">
    <location>
        <position position="340"/>
    </location>
    <ligand>
        <name>Mn(2+)</name>
        <dbReference type="ChEBI" id="CHEBI:29035"/>
        <label>2</label>
    </ligand>
</feature>
<organism>
    <name type="scientific">Arabidopsis thaliana</name>
    <name type="common">Mouse-ear cress</name>
    <dbReference type="NCBI Taxonomy" id="3702"/>
    <lineage>
        <taxon>Eukaryota</taxon>
        <taxon>Viridiplantae</taxon>
        <taxon>Streptophyta</taxon>
        <taxon>Embryophyta</taxon>
        <taxon>Tracheophyta</taxon>
        <taxon>Spermatophyta</taxon>
        <taxon>Magnoliopsida</taxon>
        <taxon>eudicotyledons</taxon>
        <taxon>Gunneridae</taxon>
        <taxon>Pentapetalae</taxon>
        <taxon>rosids</taxon>
        <taxon>malvids</taxon>
        <taxon>Brassicales</taxon>
        <taxon>Brassicaceae</taxon>
        <taxon>Camelineae</taxon>
        <taxon>Arabidopsis</taxon>
    </lineage>
</organism>
<proteinExistence type="evidence at protein level"/>
<protein>
    <recommendedName>
        <fullName>Probable protein phosphatase 2C 34</fullName>
        <shortName>AtPP2C34</shortName>
        <ecNumber>3.1.3.16</ecNumber>
    </recommendedName>
</protein>
<keyword id="KW-0378">Hydrolase</keyword>
<keyword id="KW-0460">Magnesium</keyword>
<keyword id="KW-0464">Manganese</keyword>
<keyword id="KW-0479">Metal-binding</keyword>
<keyword id="KW-0904">Protein phosphatase</keyword>
<keyword id="KW-1185">Reference proteome</keyword>
<evidence type="ECO:0000250" key="1"/>
<evidence type="ECO:0000255" key="2">
    <source>
        <dbReference type="PROSITE-ProRule" id="PRU01082"/>
    </source>
</evidence>
<evidence type="ECO:0000305" key="3"/>
<gene>
    <name type="ordered locus">At3g05640</name>
    <name type="ORF">F18C1.9</name>
</gene>
<name>P2C34_ARATH</name>
<accession>Q9M9W9</accession>
<dbReference type="EC" id="3.1.3.16"/>
<dbReference type="EMBL" id="AC011620">
    <property type="protein sequence ID" value="AAF26133.1"/>
    <property type="molecule type" value="Genomic_DNA"/>
</dbReference>
<dbReference type="EMBL" id="CP002686">
    <property type="protein sequence ID" value="AEE74270.1"/>
    <property type="molecule type" value="Genomic_DNA"/>
</dbReference>
<dbReference type="EMBL" id="CP002686">
    <property type="protein sequence ID" value="AEE74271.1"/>
    <property type="molecule type" value="Genomic_DNA"/>
</dbReference>
<dbReference type="EMBL" id="CP002686">
    <property type="protein sequence ID" value="ANM64837.1"/>
    <property type="molecule type" value="Genomic_DNA"/>
</dbReference>
<dbReference type="EMBL" id="AY050388">
    <property type="protein sequence ID" value="AAK91405.1"/>
    <property type="molecule type" value="mRNA"/>
</dbReference>
<dbReference type="EMBL" id="AY093799">
    <property type="protein sequence ID" value="AAM10415.1"/>
    <property type="molecule type" value="mRNA"/>
</dbReference>
<dbReference type="EMBL" id="AK316795">
    <property type="protein sequence ID" value="BAH19512.1"/>
    <property type="molecule type" value="mRNA"/>
</dbReference>
<dbReference type="RefSeq" id="NP_001326841.1">
    <property type="nucleotide sequence ID" value="NM_001337595.1"/>
</dbReference>
<dbReference type="RefSeq" id="NP_187215.1">
    <property type="nucleotide sequence ID" value="NM_111437.3"/>
</dbReference>
<dbReference type="RefSeq" id="NP_974230.1">
    <property type="nucleotide sequence ID" value="NM_202501.3"/>
</dbReference>
<dbReference type="SMR" id="Q9M9W9"/>
<dbReference type="BioGRID" id="5066">
    <property type="interactions" value="6"/>
</dbReference>
<dbReference type="FunCoup" id="Q9M9W9">
    <property type="interactions" value="387"/>
</dbReference>
<dbReference type="IntAct" id="Q9M9W9">
    <property type="interactions" value="8"/>
</dbReference>
<dbReference type="MINT" id="Q9M9W9"/>
<dbReference type="STRING" id="3702.Q9M9W9"/>
<dbReference type="PaxDb" id="3702-AT3G05640.1"/>
<dbReference type="ProteomicsDB" id="248800"/>
<dbReference type="EnsemblPlants" id="AT3G05640.1">
    <property type="protein sequence ID" value="AT3G05640.1"/>
    <property type="gene ID" value="AT3G05640"/>
</dbReference>
<dbReference type="EnsemblPlants" id="AT3G05640.2">
    <property type="protein sequence ID" value="AT3G05640.2"/>
    <property type="gene ID" value="AT3G05640"/>
</dbReference>
<dbReference type="EnsemblPlants" id="AT3G05640.3">
    <property type="protein sequence ID" value="AT3G05640.3"/>
    <property type="gene ID" value="AT3G05640"/>
</dbReference>
<dbReference type="GeneID" id="819731"/>
<dbReference type="Gramene" id="AT3G05640.1">
    <property type="protein sequence ID" value="AT3G05640.1"/>
    <property type="gene ID" value="AT3G05640"/>
</dbReference>
<dbReference type="Gramene" id="AT3G05640.2">
    <property type="protein sequence ID" value="AT3G05640.2"/>
    <property type="gene ID" value="AT3G05640"/>
</dbReference>
<dbReference type="Gramene" id="AT3G05640.3">
    <property type="protein sequence ID" value="AT3G05640.3"/>
    <property type="gene ID" value="AT3G05640"/>
</dbReference>
<dbReference type="KEGG" id="ath:AT3G05640"/>
<dbReference type="Araport" id="AT3G05640"/>
<dbReference type="TAIR" id="AT3G05640">
    <property type="gene designation" value="EGR1"/>
</dbReference>
<dbReference type="eggNOG" id="KOG0698">
    <property type="taxonomic scope" value="Eukaryota"/>
</dbReference>
<dbReference type="HOGENOM" id="CLU_013173_6_0_1"/>
<dbReference type="InParanoid" id="Q9M9W9"/>
<dbReference type="OMA" id="RHISIRD"/>
<dbReference type="PhylomeDB" id="Q9M9W9"/>
<dbReference type="PRO" id="PR:Q9M9W9"/>
<dbReference type="Proteomes" id="UP000006548">
    <property type="component" value="Chromosome 3"/>
</dbReference>
<dbReference type="ExpressionAtlas" id="Q9M9W9">
    <property type="expression patterns" value="baseline and differential"/>
</dbReference>
<dbReference type="GO" id="GO:0005886">
    <property type="term" value="C:plasma membrane"/>
    <property type="evidence" value="ECO:0000314"/>
    <property type="project" value="TAIR"/>
</dbReference>
<dbReference type="GO" id="GO:0046872">
    <property type="term" value="F:metal ion binding"/>
    <property type="evidence" value="ECO:0007669"/>
    <property type="project" value="UniProtKB-KW"/>
</dbReference>
<dbReference type="GO" id="GO:0004722">
    <property type="term" value="F:protein serine/threonine phosphatase activity"/>
    <property type="evidence" value="ECO:0000314"/>
    <property type="project" value="TAIR"/>
</dbReference>
<dbReference type="GO" id="GO:0045926">
    <property type="term" value="P:negative regulation of growth"/>
    <property type="evidence" value="ECO:0000315"/>
    <property type="project" value="TAIR"/>
</dbReference>
<dbReference type="GO" id="GO:0006470">
    <property type="term" value="P:protein dephosphorylation"/>
    <property type="evidence" value="ECO:0000314"/>
    <property type="project" value="TAIR"/>
</dbReference>
<dbReference type="GO" id="GO:1904526">
    <property type="term" value="P:regulation of microtubule binding"/>
    <property type="evidence" value="ECO:0000315"/>
    <property type="project" value="TAIR"/>
</dbReference>
<dbReference type="GO" id="GO:0009414">
    <property type="term" value="P:response to water deprivation"/>
    <property type="evidence" value="ECO:0000270"/>
    <property type="project" value="TAIR"/>
</dbReference>
<dbReference type="CDD" id="cd00143">
    <property type="entry name" value="PP2Cc"/>
    <property type="match status" value="1"/>
</dbReference>
<dbReference type="FunFam" id="3.60.40.10:FF:000038">
    <property type="entry name" value="Probable protein phosphatase 2C 34"/>
    <property type="match status" value="1"/>
</dbReference>
<dbReference type="Gene3D" id="3.60.40.10">
    <property type="entry name" value="PPM-type phosphatase domain"/>
    <property type="match status" value="1"/>
</dbReference>
<dbReference type="InterPro" id="IPR015655">
    <property type="entry name" value="PP2C"/>
</dbReference>
<dbReference type="InterPro" id="IPR036457">
    <property type="entry name" value="PPM-type-like_dom_sf"/>
</dbReference>
<dbReference type="InterPro" id="IPR001932">
    <property type="entry name" value="PPM-type_phosphatase-like_dom"/>
</dbReference>
<dbReference type="PANTHER" id="PTHR47992">
    <property type="entry name" value="PROTEIN PHOSPHATASE"/>
    <property type="match status" value="1"/>
</dbReference>
<dbReference type="Pfam" id="PF00481">
    <property type="entry name" value="PP2C"/>
    <property type="match status" value="1"/>
</dbReference>
<dbReference type="SMART" id="SM00332">
    <property type="entry name" value="PP2Cc"/>
    <property type="match status" value="1"/>
</dbReference>
<dbReference type="SUPFAM" id="SSF81606">
    <property type="entry name" value="PP2C-like"/>
    <property type="match status" value="1"/>
</dbReference>
<dbReference type="PROSITE" id="PS51746">
    <property type="entry name" value="PPM_2"/>
    <property type="match status" value="1"/>
</dbReference>
<sequence>MGHFSSMFNGIARSFSIKKAKNINSSKSYAKEATDEMAREAKKKELILRSSGCINADGSNNLASVFSRRGEKGVNQDCAIVWEGYGCQEDMIFCGIFDGHGPWGHFVSKQVRNSMPISLLCNWKETLSQTTIAEPDKELQRFAIWKYSFLKTCEAVDLELEHHRKIDSFNSGTTALTIVRQGDVIYIANVGDSRAVLATVSDEGSLVAVQLTVDFKPNLPQEEERIIGCNGRVFCLQDEPGVHRVWQPVDESPGLAMSRAFGDYCIKDYGLVSVPEVTQRHISIRDQFIILATDGVWDVISNQEAIDIVSSTAERAKAAKRLVQQAVRAWNRKRRGIAMDDISAVCLFFHSSSSSPSL</sequence>